<dbReference type="EC" id="1.1.1.37" evidence="1"/>
<dbReference type="EMBL" id="AP008934">
    <property type="protein sequence ID" value="BAE19172.1"/>
    <property type="molecule type" value="Genomic_DNA"/>
</dbReference>
<dbReference type="RefSeq" id="WP_002483968.1">
    <property type="nucleotide sequence ID" value="NZ_MTGA01000039.1"/>
</dbReference>
<dbReference type="SMR" id="Q49VN8"/>
<dbReference type="GeneID" id="66868185"/>
<dbReference type="KEGG" id="ssp:SSP2027"/>
<dbReference type="eggNOG" id="COG0039">
    <property type="taxonomic scope" value="Bacteria"/>
</dbReference>
<dbReference type="HOGENOM" id="CLU_045401_2_1_9"/>
<dbReference type="OrthoDB" id="9802969at2"/>
<dbReference type="Proteomes" id="UP000006371">
    <property type="component" value="Chromosome"/>
</dbReference>
<dbReference type="GO" id="GO:0004459">
    <property type="term" value="F:L-lactate dehydrogenase activity"/>
    <property type="evidence" value="ECO:0007669"/>
    <property type="project" value="TreeGrafter"/>
</dbReference>
<dbReference type="GO" id="GO:0030060">
    <property type="term" value="F:L-malate dehydrogenase (NAD+) activity"/>
    <property type="evidence" value="ECO:0007669"/>
    <property type="project" value="UniProtKB-UniRule"/>
</dbReference>
<dbReference type="GO" id="GO:0006089">
    <property type="term" value="P:lactate metabolic process"/>
    <property type="evidence" value="ECO:0007669"/>
    <property type="project" value="TreeGrafter"/>
</dbReference>
<dbReference type="GO" id="GO:0006099">
    <property type="term" value="P:tricarboxylic acid cycle"/>
    <property type="evidence" value="ECO:0007669"/>
    <property type="project" value="UniProtKB-UniRule"/>
</dbReference>
<dbReference type="CDD" id="cd01339">
    <property type="entry name" value="LDH-like_MDH"/>
    <property type="match status" value="1"/>
</dbReference>
<dbReference type="FunFam" id="3.40.50.720:FF:000018">
    <property type="entry name" value="Malate dehydrogenase"/>
    <property type="match status" value="1"/>
</dbReference>
<dbReference type="FunFam" id="3.90.110.10:FF:000004">
    <property type="entry name" value="Malate dehydrogenase"/>
    <property type="match status" value="1"/>
</dbReference>
<dbReference type="Gene3D" id="3.90.110.10">
    <property type="entry name" value="Lactate dehydrogenase/glycoside hydrolase, family 4, C-terminal"/>
    <property type="match status" value="1"/>
</dbReference>
<dbReference type="Gene3D" id="3.40.50.720">
    <property type="entry name" value="NAD(P)-binding Rossmann-like Domain"/>
    <property type="match status" value="1"/>
</dbReference>
<dbReference type="HAMAP" id="MF_00487">
    <property type="entry name" value="Malate_dehydrog_3"/>
    <property type="match status" value="1"/>
</dbReference>
<dbReference type="InterPro" id="IPR001557">
    <property type="entry name" value="L-lactate/malate_DH"/>
</dbReference>
<dbReference type="InterPro" id="IPR022383">
    <property type="entry name" value="Lactate/malate_DH_C"/>
</dbReference>
<dbReference type="InterPro" id="IPR001236">
    <property type="entry name" value="Lactate/malate_DH_N"/>
</dbReference>
<dbReference type="InterPro" id="IPR015955">
    <property type="entry name" value="Lactate_DH/Glyco_Ohase_4_C"/>
</dbReference>
<dbReference type="InterPro" id="IPR011275">
    <property type="entry name" value="Malate_DH_type3"/>
</dbReference>
<dbReference type="InterPro" id="IPR036291">
    <property type="entry name" value="NAD(P)-bd_dom_sf"/>
</dbReference>
<dbReference type="NCBIfam" id="TIGR01763">
    <property type="entry name" value="MalateDH_bact"/>
    <property type="match status" value="1"/>
</dbReference>
<dbReference type="NCBIfam" id="NF004863">
    <property type="entry name" value="PRK06223.1"/>
    <property type="match status" value="1"/>
</dbReference>
<dbReference type="PANTHER" id="PTHR43128">
    <property type="entry name" value="L-2-HYDROXYCARBOXYLATE DEHYDROGENASE (NAD(P)(+))"/>
    <property type="match status" value="1"/>
</dbReference>
<dbReference type="PANTHER" id="PTHR43128:SF16">
    <property type="entry name" value="L-LACTATE DEHYDROGENASE"/>
    <property type="match status" value="1"/>
</dbReference>
<dbReference type="Pfam" id="PF02866">
    <property type="entry name" value="Ldh_1_C"/>
    <property type="match status" value="1"/>
</dbReference>
<dbReference type="Pfam" id="PF00056">
    <property type="entry name" value="Ldh_1_N"/>
    <property type="match status" value="1"/>
</dbReference>
<dbReference type="PIRSF" id="PIRSF000102">
    <property type="entry name" value="Lac_mal_DH"/>
    <property type="match status" value="1"/>
</dbReference>
<dbReference type="PRINTS" id="PR00086">
    <property type="entry name" value="LLDHDRGNASE"/>
</dbReference>
<dbReference type="SUPFAM" id="SSF56327">
    <property type="entry name" value="LDH C-terminal domain-like"/>
    <property type="match status" value="1"/>
</dbReference>
<dbReference type="SUPFAM" id="SSF51735">
    <property type="entry name" value="NAD(P)-binding Rossmann-fold domains"/>
    <property type="match status" value="1"/>
</dbReference>
<sequence>MTKKKISIIGAGNTGATLAFIVAQHELADVVLIDRPDNEGQVKGKALDIFESSPVYGFDAKVTGSVNYADTADSDIVVITAGSPRKPGMSRDDLVQINEKVMFDVTKEIVKYSPDCKIIVLTNPVDAMTYSVLKASGFPKERVIGQSGVLDTARYQSFIAEALNVSIKDIRGLVLGGHGDTMVPLVNSTNVNGVPLHQLLNQTQIEQIVERTRKGGAEIVALLGNGSAYYAPASAVFEMIEAILKDQHRLLPSIALLEGEYGFSDICLGVPTVLSEKGIENIVELALSDNEQAQLRISADSVEEVKQALKNQ</sequence>
<keyword id="KW-0520">NAD</keyword>
<keyword id="KW-0560">Oxidoreductase</keyword>
<keyword id="KW-1185">Reference proteome</keyword>
<keyword id="KW-0816">Tricarboxylic acid cycle</keyword>
<organism>
    <name type="scientific">Staphylococcus saprophyticus subsp. saprophyticus (strain ATCC 15305 / DSM 20229 / NCIMB 8711 / NCTC 7292 / S-41)</name>
    <dbReference type="NCBI Taxonomy" id="342451"/>
    <lineage>
        <taxon>Bacteria</taxon>
        <taxon>Bacillati</taxon>
        <taxon>Bacillota</taxon>
        <taxon>Bacilli</taxon>
        <taxon>Bacillales</taxon>
        <taxon>Staphylococcaceae</taxon>
        <taxon>Staphylococcus</taxon>
    </lineage>
</organism>
<protein>
    <recommendedName>
        <fullName evidence="1">Malate dehydrogenase</fullName>
        <ecNumber evidence="1">1.1.1.37</ecNumber>
    </recommendedName>
</protein>
<gene>
    <name evidence="1" type="primary">mdh</name>
    <name type="ordered locus">SSP2027</name>
</gene>
<accession>Q49VN8</accession>
<evidence type="ECO:0000255" key="1">
    <source>
        <dbReference type="HAMAP-Rule" id="MF_00487"/>
    </source>
</evidence>
<reference key="1">
    <citation type="journal article" date="2005" name="Proc. Natl. Acad. Sci. U.S.A.">
        <title>Whole genome sequence of Staphylococcus saprophyticus reveals the pathogenesis of uncomplicated urinary tract infection.</title>
        <authorList>
            <person name="Kuroda M."/>
            <person name="Yamashita A."/>
            <person name="Hirakawa H."/>
            <person name="Kumano M."/>
            <person name="Morikawa K."/>
            <person name="Higashide M."/>
            <person name="Maruyama A."/>
            <person name="Inose Y."/>
            <person name="Matoba K."/>
            <person name="Toh H."/>
            <person name="Kuhara S."/>
            <person name="Hattori M."/>
            <person name="Ohta T."/>
        </authorList>
    </citation>
    <scope>NUCLEOTIDE SEQUENCE [LARGE SCALE GENOMIC DNA]</scope>
    <source>
        <strain>ATCC 15305 / DSM 20229 / NCIMB 8711 / NCTC 7292 / S-41</strain>
    </source>
</reference>
<comment type="function">
    <text evidence="1">Catalyzes the reversible oxidation of malate to oxaloacetate.</text>
</comment>
<comment type="catalytic activity">
    <reaction evidence="1">
        <text>(S)-malate + NAD(+) = oxaloacetate + NADH + H(+)</text>
        <dbReference type="Rhea" id="RHEA:21432"/>
        <dbReference type="ChEBI" id="CHEBI:15378"/>
        <dbReference type="ChEBI" id="CHEBI:15589"/>
        <dbReference type="ChEBI" id="CHEBI:16452"/>
        <dbReference type="ChEBI" id="CHEBI:57540"/>
        <dbReference type="ChEBI" id="CHEBI:57945"/>
        <dbReference type="EC" id="1.1.1.37"/>
    </reaction>
</comment>
<comment type="similarity">
    <text evidence="1">Belongs to the LDH/MDH superfamily. MDH type 3 family.</text>
</comment>
<name>MDH_STAS1</name>
<feature type="chain" id="PRO_0000241968" description="Malate dehydrogenase">
    <location>
        <begin position="1"/>
        <end position="312"/>
    </location>
</feature>
<feature type="active site" description="Proton acceptor" evidence="1">
    <location>
        <position position="178"/>
    </location>
</feature>
<feature type="binding site" evidence="1">
    <location>
        <begin position="10"/>
        <end position="15"/>
    </location>
    <ligand>
        <name>NAD(+)</name>
        <dbReference type="ChEBI" id="CHEBI:57540"/>
    </ligand>
</feature>
<feature type="binding site" evidence="1">
    <location>
        <position position="34"/>
    </location>
    <ligand>
        <name>NAD(+)</name>
        <dbReference type="ChEBI" id="CHEBI:57540"/>
    </ligand>
</feature>
<feature type="binding site" evidence="1">
    <location>
        <position position="85"/>
    </location>
    <ligand>
        <name>substrate</name>
    </ligand>
</feature>
<feature type="binding site" evidence="1">
    <location>
        <position position="91"/>
    </location>
    <ligand>
        <name>substrate</name>
    </ligand>
</feature>
<feature type="binding site" evidence="1">
    <location>
        <position position="98"/>
    </location>
    <ligand>
        <name>NAD(+)</name>
        <dbReference type="ChEBI" id="CHEBI:57540"/>
    </ligand>
</feature>
<feature type="binding site" evidence="1">
    <location>
        <begin position="121"/>
        <end position="123"/>
    </location>
    <ligand>
        <name>NAD(+)</name>
        <dbReference type="ChEBI" id="CHEBI:57540"/>
    </ligand>
</feature>
<feature type="binding site" evidence="1">
    <location>
        <position position="123"/>
    </location>
    <ligand>
        <name>substrate</name>
    </ligand>
</feature>
<feature type="binding site" evidence="1">
    <location>
        <position position="154"/>
    </location>
    <ligand>
        <name>substrate</name>
    </ligand>
</feature>
<proteinExistence type="inferred from homology"/>